<dbReference type="EMBL" id="AK310310">
    <property type="status" value="NOT_ANNOTATED_CDS"/>
    <property type="molecule type" value="mRNA"/>
</dbReference>
<dbReference type="EMBL" id="AL353572">
    <property type="status" value="NOT_ANNOTATED_CDS"/>
    <property type="molecule type" value="Genomic_DNA"/>
</dbReference>
<dbReference type="RefSeq" id="NP_001138596.1">
    <molecule id="P0DKV0-1"/>
    <property type="nucleotide sequence ID" value="NM_001145124.1"/>
</dbReference>
<dbReference type="SMR" id="P0DKV0"/>
<dbReference type="BioGRID" id="137483">
    <property type="interactions" value="2"/>
</dbReference>
<dbReference type="GlyGen" id="P0DKV0">
    <property type="glycosylation" value="2 sites, 1 O-linked glycan (1 site)"/>
</dbReference>
<dbReference type="iPTMnet" id="P0DKV0"/>
<dbReference type="PhosphoSitePlus" id="P0DKV0"/>
<dbReference type="BioMuta" id="HGNC:27846"/>
<dbReference type="jPOST" id="P0DKV0"/>
<dbReference type="MassIVE" id="P0DKV0"/>
<dbReference type="PeptideAtlas" id="P0DKV0"/>
<dbReference type="DNASU" id="441452"/>
<dbReference type="Ensembl" id="ENST00000706933.1">
    <molecule id="P0DKV0-1"/>
    <property type="protein sequence ID" value="ENSP00000516655.1"/>
    <property type="gene ID" value="ENSG00000230246.9"/>
</dbReference>
<dbReference type="GeneID" id="441452"/>
<dbReference type="KEGG" id="hsa:441452"/>
<dbReference type="MANE-Select" id="ENST00000706933.1">
    <property type="protein sequence ID" value="ENSP00000516655.1"/>
    <property type="RefSeq nucleotide sequence ID" value="NM_001145124.1"/>
    <property type="RefSeq protein sequence ID" value="NP_001138596.1"/>
</dbReference>
<dbReference type="AGR" id="HGNC:27846"/>
<dbReference type="CTD" id="441452"/>
<dbReference type="DisGeNET" id="441452"/>
<dbReference type="GeneCards" id="SPATA31C1"/>
<dbReference type="HGNC" id="HGNC:27846">
    <property type="gene designation" value="SPATA31C1"/>
</dbReference>
<dbReference type="HPA" id="ENSG00000230246">
    <property type="expression patterns" value="Tissue enriched (testis)"/>
</dbReference>
<dbReference type="neXtProt" id="NX_P0DKV0"/>
<dbReference type="OpenTargets" id="ENSG00000230246"/>
<dbReference type="GeneTree" id="ENSGT00950000183043"/>
<dbReference type="InParanoid" id="P0DKV0"/>
<dbReference type="PAN-GO" id="P0DKV0">
    <property type="GO annotations" value="0 GO annotations based on evolutionary models"/>
</dbReference>
<dbReference type="PathwayCommons" id="P0DKV0"/>
<dbReference type="BioGRID-ORCS" id="441452">
    <property type="hits" value="7 hits in 232 CRISPR screens"/>
</dbReference>
<dbReference type="GenomeRNAi" id="441452"/>
<dbReference type="Pharos" id="P0DKV0">
    <property type="development level" value="Tdark"/>
</dbReference>
<dbReference type="Proteomes" id="UP000005640">
    <property type="component" value="Chromosome 9"/>
</dbReference>
<dbReference type="RNAct" id="P0DKV0">
    <property type="molecule type" value="protein"/>
</dbReference>
<dbReference type="GO" id="GO:0016020">
    <property type="term" value="C:membrane"/>
    <property type="evidence" value="ECO:0007669"/>
    <property type="project" value="UniProtKB-SubCell"/>
</dbReference>
<dbReference type="GO" id="GO:0030154">
    <property type="term" value="P:cell differentiation"/>
    <property type="evidence" value="ECO:0007669"/>
    <property type="project" value="UniProtKB-KW"/>
</dbReference>
<dbReference type="GO" id="GO:0007283">
    <property type="term" value="P:spermatogenesis"/>
    <property type="evidence" value="ECO:0007669"/>
    <property type="project" value="UniProtKB-KW"/>
</dbReference>
<dbReference type="InterPro" id="IPR039509">
    <property type="entry name" value="SPATA31"/>
</dbReference>
<dbReference type="InterPro" id="IPR027970">
    <property type="entry name" value="SPATA31F3-like"/>
</dbReference>
<dbReference type="PANTHER" id="PTHR21859">
    <property type="entry name" value="ACROSOME-SPECIFIC PROTEIN"/>
    <property type="match status" value="1"/>
</dbReference>
<dbReference type="PANTHER" id="PTHR21859:SF44">
    <property type="entry name" value="SPERMATOGENESIS-ASSOCIATED PROTEIN 31C1-RELATED"/>
    <property type="match status" value="1"/>
</dbReference>
<dbReference type="Pfam" id="PF15371">
    <property type="entry name" value="DUF4599"/>
    <property type="match status" value="1"/>
</dbReference>
<dbReference type="Pfam" id="PF14650">
    <property type="entry name" value="FAM75"/>
    <property type="match status" value="1"/>
</dbReference>
<accession>P0DKV0</accession>
<comment type="function">
    <text evidence="1">May play a role in spermatogenesis.</text>
</comment>
<comment type="subcellular location">
    <subcellularLocation>
        <location evidence="5">Membrane</location>
        <topology evidence="5">Single-pass membrane protein</topology>
    </subcellularLocation>
</comment>
<comment type="alternative products">
    <event type="alternative splicing"/>
    <isoform>
        <id>P0DKV0-1</id>
        <name>1</name>
        <sequence type="displayed"/>
    </isoform>
    <isoform>
        <id>P0DKV0-2</id>
        <name>2</name>
        <sequence type="described" ref="VSP_044951 VSP_044952"/>
    </isoform>
</comment>
<comment type="similarity">
    <text evidence="5">Belongs to the SPATA31 family.</text>
</comment>
<evidence type="ECO:0000250" key="1"/>
<evidence type="ECO:0000255" key="2"/>
<evidence type="ECO:0000256" key="3">
    <source>
        <dbReference type="SAM" id="MobiDB-lite"/>
    </source>
</evidence>
<evidence type="ECO:0000303" key="4">
    <source>
    </source>
</evidence>
<evidence type="ECO:0000305" key="5"/>
<keyword id="KW-0025">Alternative splicing</keyword>
<keyword id="KW-0221">Differentiation</keyword>
<keyword id="KW-0472">Membrane</keyword>
<keyword id="KW-1267">Proteomics identification</keyword>
<keyword id="KW-1185">Reference proteome</keyword>
<keyword id="KW-0744">Spermatogenesis</keyword>
<keyword id="KW-0812">Transmembrane</keyword>
<keyword id="KW-1133">Transmembrane helix</keyword>
<gene>
    <name type="primary">SPATA31C1</name>
    <name type="synonym">FAM75C1</name>
</gene>
<name>S31C1_HUMAN</name>
<sequence>MENLPFPLKLLSASSLNTPSSTPWVLDIFLTLVFALGLFFLLLPYFSYLRCDNPPSPSPRKRKRHLVSQRHLVSQCPTGRRGRPRGRMKNHSLRACRECPRGLEETWDLLSQLQSLLGPHLEKGDFGQLSGPDPPGEVGKRTPDGASRSSHEPMEDAAPIVSPLASPDPRTKHPQDLASTPPPGPMTTSVSSLSASQPPEPSLLLERPSPEPPALFPHPPHTPDPLACSPPPPKGFTPPPLRDSTLLTPSHCDSVALPLDTVPQSLSPREDLAASVPAISGLGGSNSQVSALSWSQETTKTWCIFNSSVQQDHLSRQRDTTMSPLLFQAQPLSHLGPESQPFISSTPQFRPTPMAQAEAQAHLQSSFPVLSPAFLSPMKNTGVACPASQNKVQALSLPETQHPERPLLRKQLEGGLALPSRVQKSQDVFSVSTPNLPQERLTSILPENFPVSPELWRQLEQYMGQRGRIQESLDLMQLQDELPGTSQAKGKPRPWQSSTSTGESSKEAQTVKFQLERDPCPHLGQILGETPQNLSRGMESFPGKVLGATSEESERNLRKPLRSDSGSDLLRRTERNHIENILKAHMGRKLGQTNEGLIPVSVRRSWLAVNQAFPVSNTHVKTSNLAAPKSRKACVNTAQVLSFLELCTQQVLEAHIVRFWAKHRWGLPLRVLKPIQCFQLEKVSSLSLIQLAGPSSDTCESGAGSKVEVATLLGEPPMASLRKQVLTKPSVHMPERLQASSPACKQFQRAPRGIPSSNDHGSLKAPTAGQEGRWPSKPLTYSLKGSTQQSRSLGAQSSRAGETREAVPQPTVPLGTCMRANLQATSEDVRGFKAPGASKSSLLPRMSVSQDPRKLCLMEEAVSEFEPGMATKSETQPQVSAAVVLLPDGQASVVPHASENLASQVPQGHLQSTPTGNMQASQELCDLMSARRSNMGHKEPRNPNCQGSCKSQSPMFPPTHKRENSRKPNLEKHEEMFQGLRTPQLTPGRKTEDTRQNEGVQLLPSKKQPPSISHFGENIKQFFETIFSKKERKPAPVTAESQKTVKNRSCVYGSSAEAERLMTAVGQIPEENMSLCHARHASKVNQQRQQFQAPVCGFPCNHRHPFYSDHSRMLSYAASSQQATLKNQSRPNRDRQIRDQQPLKSVRCNNEQWGLRHPQLLLPKKAVSPVSPPQHRPKTPSASSHHHH</sequence>
<proteinExistence type="evidence at protein level"/>
<reference key="1">
    <citation type="journal article" date="2004" name="Nat. Genet.">
        <title>Complete sequencing and characterization of 21,243 full-length human cDNAs.</title>
        <authorList>
            <person name="Ota T."/>
            <person name="Suzuki Y."/>
            <person name="Nishikawa T."/>
            <person name="Otsuki T."/>
            <person name="Sugiyama T."/>
            <person name="Irie R."/>
            <person name="Wakamatsu A."/>
            <person name="Hayashi K."/>
            <person name="Sato H."/>
            <person name="Nagai K."/>
            <person name="Kimura K."/>
            <person name="Makita H."/>
            <person name="Sekine M."/>
            <person name="Obayashi M."/>
            <person name="Nishi T."/>
            <person name="Shibahara T."/>
            <person name="Tanaka T."/>
            <person name="Ishii S."/>
            <person name="Yamamoto J."/>
            <person name="Saito K."/>
            <person name="Kawai Y."/>
            <person name="Isono Y."/>
            <person name="Nakamura Y."/>
            <person name="Nagahari K."/>
            <person name="Murakami K."/>
            <person name="Yasuda T."/>
            <person name="Iwayanagi T."/>
            <person name="Wagatsuma M."/>
            <person name="Shiratori A."/>
            <person name="Sudo H."/>
            <person name="Hosoiri T."/>
            <person name="Kaku Y."/>
            <person name="Kodaira H."/>
            <person name="Kondo H."/>
            <person name="Sugawara M."/>
            <person name="Takahashi M."/>
            <person name="Kanda K."/>
            <person name="Yokoi T."/>
            <person name="Furuya T."/>
            <person name="Kikkawa E."/>
            <person name="Omura Y."/>
            <person name="Abe K."/>
            <person name="Kamihara K."/>
            <person name="Katsuta N."/>
            <person name="Sato K."/>
            <person name="Tanikawa M."/>
            <person name="Yamazaki M."/>
            <person name="Ninomiya K."/>
            <person name="Ishibashi T."/>
            <person name="Yamashita H."/>
            <person name="Murakawa K."/>
            <person name="Fujimori K."/>
            <person name="Tanai H."/>
            <person name="Kimata M."/>
            <person name="Watanabe M."/>
            <person name="Hiraoka S."/>
            <person name="Chiba Y."/>
            <person name="Ishida S."/>
            <person name="Ono Y."/>
            <person name="Takiguchi S."/>
            <person name="Watanabe S."/>
            <person name="Yosida M."/>
            <person name="Hotuta T."/>
            <person name="Kusano J."/>
            <person name="Kanehori K."/>
            <person name="Takahashi-Fujii A."/>
            <person name="Hara H."/>
            <person name="Tanase T.-O."/>
            <person name="Nomura Y."/>
            <person name="Togiya S."/>
            <person name="Komai F."/>
            <person name="Hara R."/>
            <person name="Takeuchi K."/>
            <person name="Arita M."/>
            <person name="Imose N."/>
            <person name="Musashino K."/>
            <person name="Yuuki H."/>
            <person name="Oshima A."/>
            <person name="Sasaki N."/>
            <person name="Aotsuka S."/>
            <person name="Yoshikawa Y."/>
            <person name="Matsunawa H."/>
            <person name="Ichihara T."/>
            <person name="Shiohata N."/>
            <person name="Sano S."/>
            <person name="Moriya S."/>
            <person name="Momiyama H."/>
            <person name="Satoh N."/>
            <person name="Takami S."/>
            <person name="Terashima Y."/>
            <person name="Suzuki O."/>
            <person name="Nakagawa S."/>
            <person name="Senoh A."/>
            <person name="Mizoguchi H."/>
            <person name="Goto Y."/>
            <person name="Shimizu F."/>
            <person name="Wakebe H."/>
            <person name="Hishigaki H."/>
            <person name="Watanabe T."/>
            <person name="Sugiyama A."/>
            <person name="Takemoto M."/>
            <person name="Kawakami B."/>
            <person name="Yamazaki M."/>
            <person name="Watanabe K."/>
            <person name="Kumagai A."/>
            <person name="Itakura S."/>
            <person name="Fukuzumi Y."/>
            <person name="Fujimori Y."/>
            <person name="Komiyama M."/>
            <person name="Tashiro H."/>
            <person name="Tanigami A."/>
            <person name="Fujiwara T."/>
            <person name="Ono T."/>
            <person name="Yamada K."/>
            <person name="Fujii Y."/>
            <person name="Ozaki K."/>
            <person name="Hirao M."/>
            <person name="Ohmori Y."/>
            <person name="Kawabata A."/>
            <person name="Hikiji T."/>
            <person name="Kobatake N."/>
            <person name="Inagaki H."/>
            <person name="Ikema Y."/>
            <person name="Okamoto S."/>
            <person name="Okitani R."/>
            <person name="Kawakami T."/>
            <person name="Noguchi S."/>
            <person name="Itoh T."/>
            <person name="Shigeta K."/>
            <person name="Senba T."/>
            <person name="Matsumura K."/>
            <person name="Nakajima Y."/>
            <person name="Mizuno T."/>
            <person name="Morinaga M."/>
            <person name="Sasaki M."/>
            <person name="Togashi T."/>
            <person name="Oyama M."/>
            <person name="Hata H."/>
            <person name="Watanabe M."/>
            <person name="Komatsu T."/>
            <person name="Mizushima-Sugano J."/>
            <person name="Satoh T."/>
            <person name="Shirai Y."/>
            <person name="Takahashi Y."/>
            <person name="Nakagawa K."/>
            <person name="Okumura K."/>
            <person name="Nagase T."/>
            <person name="Nomura N."/>
            <person name="Kikuchi H."/>
            <person name="Masuho Y."/>
            <person name="Yamashita R."/>
            <person name="Nakai K."/>
            <person name="Yada T."/>
            <person name="Nakamura Y."/>
            <person name="Ohara O."/>
            <person name="Isogai T."/>
            <person name="Sugano S."/>
        </authorList>
    </citation>
    <scope>NUCLEOTIDE SEQUENCE [LARGE SCALE MRNA] (ISOFORM 2)</scope>
    <source>
        <tissue>Testis</tissue>
    </source>
</reference>
<reference key="2">
    <citation type="journal article" date="2004" name="Nature">
        <title>DNA sequence and analysis of human chromosome 9.</title>
        <authorList>
            <person name="Humphray S.J."/>
            <person name="Oliver K."/>
            <person name="Hunt A.R."/>
            <person name="Plumb R.W."/>
            <person name="Loveland J.E."/>
            <person name="Howe K.L."/>
            <person name="Andrews T.D."/>
            <person name="Searle S."/>
            <person name="Hunt S.E."/>
            <person name="Scott C.E."/>
            <person name="Jones M.C."/>
            <person name="Ainscough R."/>
            <person name="Almeida J.P."/>
            <person name="Ambrose K.D."/>
            <person name="Ashwell R.I.S."/>
            <person name="Babbage A.K."/>
            <person name="Babbage S."/>
            <person name="Bagguley C.L."/>
            <person name="Bailey J."/>
            <person name="Banerjee R."/>
            <person name="Barker D.J."/>
            <person name="Barlow K.F."/>
            <person name="Bates K."/>
            <person name="Beasley H."/>
            <person name="Beasley O."/>
            <person name="Bird C.P."/>
            <person name="Bray-Allen S."/>
            <person name="Brown A.J."/>
            <person name="Brown J.Y."/>
            <person name="Burford D."/>
            <person name="Burrill W."/>
            <person name="Burton J."/>
            <person name="Carder C."/>
            <person name="Carter N.P."/>
            <person name="Chapman J.C."/>
            <person name="Chen Y."/>
            <person name="Clarke G."/>
            <person name="Clark S.Y."/>
            <person name="Clee C.M."/>
            <person name="Clegg S."/>
            <person name="Collier R.E."/>
            <person name="Corby N."/>
            <person name="Crosier M."/>
            <person name="Cummings A.T."/>
            <person name="Davies J."/>
            <person name="Dhami P."/>
            <person name="Dunn M."/>
            <person name="Dutta I."/>
            <person name="Dyer L.W."/>
            <person name="Earthrowl M.E."/>
            <person name="Faulkner L."/>
            <person name="Fleming C.J."/>
            <person name="Frankish A."/>
            <person name="Frankland J.A."/>
            <person name="French L."/>
            <person name="Fricker D.G."/>
            <person name="Garner P."/>
            <person name="Garnett J."/>
            <person name="Ghori J."/>
            <person name="Gilbert J.G.R."/>
            <person name="Glison C."/>
            <person name="Grafham D.V."/>
            <person name="Gribble S."/>
            <person name="Griffiths C."/>
            <person name="Griffiths-Jones S."/>
            <person name="Grocock R."/>
            <person name="Guy J."/>
            <person name="Hall R.E."/>
            <person name="Hammond S."/>
            <person name="Harley J.L."/>
            <person name="Harrison E.S.I."/>
            <person name="Hart E.A."/>
            <person name="Heath P.D."/>
            <person name="Henderson C.D."/>
            <person name="Hopkins B.L."/>
            <person name="Howard P.J."/>
            <person name="Howden P.J."/>
            <person name="Huckle E."/>
            <person name="Johnson C."/>
            <person name="Johnson D."/>
            <person name="Joy A.A."/>
            <person name="Kay M."/>
            <person name="Keenan S."/>
            <person name="Kershaw J.K."/>
            <person name="Kimberley A.M."/>
            <person name="King A."/>
            <person name="Knights A."/>
            <person name="Laird G.K."/>
            <person name="Langford C."/>
            <person name="Lawlor S."/>
            <person name="Leongamornlert D.A."/>
            <person name="Leversha M."/>
            <person name="Lloyd C."/>
            <person name="Lloyd D.M."/>
            <person name="Lovell J."/>
            <person name="Martin S."/>
            <person name="Mashreghi-Mohammadi M."/>
            <person name="Matthews L."/>
            <person name="McLaren S."/>
            <person name="McLay K.E."/>
            <person name="McMurray A."/>
            <person name="Milne S."/>
            <person name="Nickerson T."/>
            <person name="Nisbett J."/>
            <person name="Nordsiek G."/>
            <person name="Pearce A.V."/>
            <person name="Peck A.I."/>
            <person name="Porter K.M."/>
            <person name="Pandian R."/>
            <person name="Pelan S."/>
            <person name="Phillimore B."/>
            <person name="Povey S."/>
            <person name="Ramsey Y."/>
            <person name="Rand V."/>
            <person name="Scharfe M."/>
            <person name="Sehra H.K."/>
            <person name="Shownkeen R."/>
            <person name="Sims S.K."/>
            <person name="Skuce C.D."/>
            <person name="Smith M."/>
            <person name="Steward C.A."/>
            <person name="Swarbreck D."/>
            <person name="Sycamore N."/>
            <person name="Tester J."/>
            <person name="Thorpe A."/>
            <person name="Tracey A."/>
            <person name="Tromans A."/>
            <person name="Thomas D.W."/>
            <person name="Wall M."/>
            <person name="Wallis J.M."/>
            <person name="West A.P."/>
            <person name="Whitehead S.L."/>
            <person name="Willey D.L."/>
            <person name="Williams S.A."/>
            <person name="Wilming L."/>
            <person name="Wray P.W."/>
            <person name="Young L."/>
            <person name="Ashurst J.L."/>
            <person name="Coulson A."/>
            <person name="Blocker H."/>
            <person name="Durbin R.M."/>
            <person name="Sulston J.E."/>
            <person name="Hubbard T."/>
            <person name="Jackson M.J."/>
            <person name="Bentley D.R."/>
            <person name="Beck S."/>
            <person name="Rogers J."/>
            <person name="Dunham I."/>
        </authorList>
    </citation>
    <scope>NUCLEOTIDE SEQUENCE [LARGE SCALE GENOMIC DNA]</scope>
</reference>
<organism>
    <name type="scientific">Homo sapiens</name>
    <name type="common">Human</name>
    <dbReference type="NCBI Taxonomy" id="9606"/>
    <lineage>
        <taxon>Eukaryota</taxon>
        <taxon>Metazoa</taxon>
        <taxon>Chordata</taxon>
        <taxon>Craniata</taxon>
        <taxon>Vertebrata</taxon>
        <taxon>Euteleostomi</taxon>
        <taxon>Mammalia</taxon>
        <taxon>Eutheria</taxon>
        <taxon>Euarchontoglires</taxon>
        <taxon>Primates</taxon>
        <taxon>Haplorrhini</taxon>
        <taxon>Catarrhini</taxon>
        <taxon>Hominidae</taxon>
        <taxon>Homo</taxon>
    </lineage>
</organism>
<protein>
    <recommendedName>
        <fullName>Spermatogenesis-associated protein 31C1</fullName>
    </recommendedName>
    <alternativeName>
        <fullName>Protein FAM75C1</fullName>
    </alternativeName>
</protein>
<feature type="chain" id="PRO_0000420908" description="Spermatogenesis-associated protein 31C1">
    <location>
        <begin position="1"/>
        <end position="1188"/>
    </location>
</feature>
<feature type="transmembrane region" description="Helical" evidence="2">
    <location>
        <begin position="23"/>
        <end position="43"/>
    </location>
</feature>
<feature type="region of interest" description="Disordered" evidence="3">
    <location>
        <begin position="57"/>
        <end position="92"/>
    </location>
</feature>
<feature type="region of interest" description="Disordered" evidence="3">
    <location>
        <begin position="121"/>
        <end position="249"/>
    </location>
</feature>
<feature type="region of interest" description="Disordered" evidence="3">
    <location>
        <begin position="483"/>
        <end position="510"/>
    </location>
</feature>
<feature type="region of interest" description="Disordered" evidence="3">
    <location>
        <begin position="530"/>
        <end position="567"/>
    </location>
</feature>
<feature type="region of interest" description="Disordered" evidence="3">
    <location>
        <begin position="733"/>
        <end position="813"/>
    </location>
</feature>
<feature type="region of interest" description="Disordered" evidence="3">
    <location>
        <begin position="934"/>
        <end position="1013"/>
    </location>
</feature>
<feature type="region of interest" description="Disordered" evidence="3">
    <location>
        <begin position="1121"/>
        <end position="1143"/>
    </location>
</feature>
<feature type="region of interest" description="Disordered" evidence="3">
    <location>
        <begin position="1155"/>
        <end position="1188"/>
    </location>
</feature>
<feature type="compositionally biased region" description="Basic residues" evidence="3">
    <location>
        <begin position="59"/>
        <end position="68"/>
    </location>
</feature>
<feature type="compositionally biased region" description="Basic residues" evidence="3">
    <location>
        <begin position="80"/>
        <end position="92"/>
    </location>
</feature>
<feature type="compositionally biased region" description="Basic and acidic residues" evidence="3">
    <location>
        <begin position="138"/>
        <end position="154"/>
    </location>
</feature>
<feature type="compositionally biased region" description="Low complexity" evidence="3">
    <location>
        <begin position="191"/>
        <end position="207"/>
    </location>
</feature>
<feature type="compositionally biased region" description="Pro residues" evidence="3">
    <location>
        <begin position="210"/>
        <end position="241"/>
    </location>
</feature>
<feature type="compositionally biased region" description="Polar residues" evidence="3">
    <location>
        <begin position="495"/>
        <end position="510"/>
    </location>
</feature>
<feature type="compositionally biased region" description="Polar residues" evidence="3">
    <location>
        <begin position="783"/>
        <end position="800"/>
    </location>
</feature>
<feature type="compositionally biased region" description="Polar residues" evidence="3">
    <location>
        <begin position="943"/>
        <end position="954"/>
    </location>
</feature>
<feature type="compositionally biased region" description="Basic and acidic residues" evidence="3">
    <location>
        <begin position="960"/>
        <end position="976"/>
    </location>
</feature>
<feature type="compositionally biased region" description="Polar residues" evidence="3">
    <location>
        <begin position="1121"/>
        <end position="1130"/>
    </location>
</feature>
<feature type="splice variant" id="VSP_044951" description="In isoform 2." evidence="4">
    <original>VSSLSL</original>
    <variation>RPNFGV</variation>
    <location>
        <begin position="683"/>
        <end position="688"/>
    </location>
</feature>
<feature type="splice variant" id="VSP_044952" description="In isoform 2." evidence="4">
    <location>
        <begin position="689"/>
        <end position="1188"/>
    </location>
</feature>